<sequence length="454" mass="49197">MSDNDTIVAQATPPGRGGVGILRISGLKAREVAETVLGKLPKPRYADYLPFKDADGSVLDQGIALWFPGPNSFTGEDVLELQGHGGPVILDLLLKRILTIPGLRIARPGEFSERAFLNDKLDLAQAEAIADLIDASSEQAARSALNSLQGAFSARVNHLVEALTHLRIYVEAAIDFPDEEIDFLSDGKIEAQLNDVIADLDAVRAEARQGSLLREGMKVVIAGRPNAGKSSLLNALAGREAAIVTDIAGTTRDVLREHIHIDGMPLHIIDTAGLREASDEVERIGIERAWQEIEQADRVLFMVDGTTTDAVDPAEIWPEFIARLPAKLPITVVRNKADITGETLGMSEVNGHALIRLSARTGEGVDVLRNHLKQSMGFDTNMEGGFLARRRHLQALEQAAEHLQQGKAQLLGAWAGELLAEELRLAQQNLSEITGEFTSDDLLGRIFSSFCIGK</sequence>
<comment type="function">
    <text evidence="1">Exhibits a very high intrinsic GTPase hydrolysis rate. Involved in the addition of a carboxymethylaminomethyl (cmnm) group at the wobble position (U34) of certain tRNAs, forming tRNA-cmnm(5)s(2)U34.</text>
</comment>
<comment type="cofactor">
    <cofactor evidence="1">
        <name>K(+)</name>
        <dbReference type="ChEBI" id="CHEBI:29103"/>
    </cofactor>
    <text evidence="1">Binds 1 potassium ion per subunit.</text>
</comment>
<comment type="subunit">
    <text evidence="1">Homodimer. Heterotetramer of two MnmE and two MnmG subunits.</text>
</comment>
<comment type="subcellular location">
    <subcellularLocation>
        <location evidence="1">Cytoplasm</location>
    </subcellularLocation>
</comment>
<comment type="similarity">
    <text evidence="1">Belongs to the TRAFAC class TrmE-Era-EngA-EngB-Septin-like GTPase superfamily. TrmE GTPase family.</text>
</comment>
<organism>
    <name type="scientific">Escherichia coli (strain SMS-3-5 / SECEC)</name>
    <dbReference type="NCBI Taxonomy" id="439855"/>
    <lineage>
        <taxon>Bacteria</taxon>
        <taxon>Pseudomonadati</taxon>
        <taxon>Pseudomonadota</taxon>
        <taxon>Gammaproteobacteria</taxon>
        <taxon>Enterobacterales</taxon>
        <taxon>Enterobacteriaceae</taxon>
        <taxon>Escherichia</taxon>
    </lineage>
</organism>
<gene>
    <name evidence="1" type="primary">mnmE</name>
    <name evidence="1" type="synonym">trmE</name>
    <name type="ordered locus">EcSMS35_4073</name>
</gene>
<protein>
    <recommendedName>
        <fullName evidence="1">tRNA modification GTPase MnmE</fullName>
        <ecNumber evidence="1">3.6.-.-</ecNumber>
    </recommendedName>
</protein>
<keyword id="KW-0963">Cytoplasm</keyword>
<keyword id="KW-0342">GTP-binding</keyword>
<keyword id="KW-0378">Hydrolase</keyword>
<keyword id="KW-0460">Magnesium</keyword>
<keyword id="KW-0479">Metal-binding</keyword>
<keyword id="KW-0547">Nucleotide-binding</keyword>
<keyword id="KW-0630">Potassium</keyword>
<keyword id="KW-0819">tRNA processing</keyword>
<feature type="chain" id="PRO_0000345783" description="tRNA modification GTPase MnmE">
    <location>
        <begin position="1"/>
        <end position="454"/>
    </location>
</feature>
<feature type="domain" description="TrmE-type G">
    <location>
        <begin position="216"/>
        <end position="377"/>
    </location>
</feature>
<feature type="binding site" evidence="1">
    <location>
        <position position="23"/>
    </location>
    <ligand>
        <name>(6S)-5-formyl-5,6,7,8-tetrahydrofolate</name>
        <dbReference type="ChEBI" id="CHEBI:57457"/>
    </ligand>
</feature>
<feature type="binding site" evidence="1">
    <location>
        <position position="80"/>
    </location>
    <ligand>
        <name>(6S)-5-formyl-5,6,7,8-tetrahydrofolate</name>
        <dbReference type="ChEBI" id="CHEBI:57457"/>
    </ligand>
</feature>
<feature type="binding site" evidence="1">
    <location>
        <position position="120"/>
    </location>
    <ligand>
        <name>(6S)-5-formyl-5,6,7,8-tetrahydrofolate</name>
        <dbReference type="ChEBI" id="CHEBI:57457"/>
    </ligand>
</feature>
<feature type="binding site" evidence="1">
    <location>
        <begin position="226"/>
        <end position="231"/>
    </location>
    <ligand>
        <name>GTP</name>
        <dbReference type="ChEBI" id="CHEBI:37565"/>
    </ligand>
</feature>
<feature type="binding site" evidence="1">
    <location>
        <position position="226"/>
    </location>
    <ligand>
        <name>K(+)</name>
        <dbReference type="ChEBI" id="CHEBI:29103"/>
    </ligand>
</feature>
<feature type="binding site" evidence="1">
    <location>
        <position position="230"/>
    </location>
    <ligand>
        <name>Mg(2+)</name>
        <dbReference type="ChEBI" id="CHEBI:18420"/>
    </ligand>
</feature>
<feature type="binding site" evidence="1">
    <location>
        <begin position="245"/>
        <end position="251"/>
    </location>
    <ligand>
        <name>GTP</name>
        <dbReference type="ChEBI" id="CHEBI:37565"/>
    </ligand>
</feature>
<feature type="binding site" evidence="1">
    <location>
        <position position="245"/>
    </location>
    <ligand>
        <name>K(+)</name>
        <dbReference type="ChEBI" id="CHEBI:29103"/>
    </ligand>
</feature>
<feature type="binding site" evidence="1">
    <location>
        <position position="247"/>
    </location>
    <ligand>
        <name>K(+)</name>
        <dbReference type="ChEBI" id="CHEBI:29103"/>
    </ligand>
</feature>
<feature type="binding site" evidence="1">
    <location>
        <position position="250"/>
    </location>
    <ligand>
        <name>K(+)</name>
        <dbReference type="ChEBI" id="CHEBI:29103"/>
    </ligand>
</feature>
<feature type="binding site" evidence="1">
    <location>
        <position position="251"/>
    </location>
    <ligand>
        <name>Mg(2+)</name>
        <dbReference type="ChEBI" id="CHEBI:18420"/>
    </ligand>
</feature>
<feature type="binding site" evidence="1">
    <location>
        <begin position="270"/>
        <end position="273"/>
    </location>
    <ligand>
        <name>GTP</name>
        <dbReference type="ChEBI" id="CHEBI:37565"/>
    </ligand>
</feature>
<feature type="binding site" evidence="1">
    <location>
        <begin position="335"/>
        <end position="338"/>
    </location>
    <ligand>
        <name>GTP</name>
        <dbReference type="ChEBI" id="CHEBI:37565"/>
    </ligand>
</feature>
<feature type="binding site" evidence="1">
    <location>
        <begin position="358"/>
        <end position="360"/>
    </location>
    <ligand>
        <name>GTP</name>
        <dbReference type="ChEBI" id="CHEBI:37565"/>
    </ligand>
</feature>
<feature type="binding site" evidence="1">
    <location>
        <position position="454"/>
    </location>
    <ligand>
        <name>(6S)-5-formyl-5,6,7,8-tetrahydrofolate</name>
        <dbReference type="ChEBI" id="CHEBI:57457"/>
    </ligand>
</feature>
<evidence type="ECO:0000255" key="1">
    <source>
        <dbReference type="HAMAP-Rule" id="MF_00379"/>
    </source>
</evidence>
<reference key="1">
    <citation type="journal article" date="2008" name="J. Bacteriol.">
        <title>Insights into the environmental resistance gene pool from the genome sequence of the multidrug-resistant environmental isolate Escherichia coli SMS-3-5.</title>
        <authorList>
            <person name="Fricke W.F."/>
            <person name="Wright M.S."/>
            <person name="Lindell A.H."/>
            <person name="Harkins D.M."/>
            <person name="Baker-Austin C."/>
            <person name="Ravel J."/>
            <person name="Stepanauskas R."/>
        </authorList>
    </citation>
    <scope>NUCLEOTIDE SEQUENCE [LARGE SCALE GENOMIC DNA]</scope>
    <source>
        <strain>SMS-3-5 / SECEC</strain>
    </source>
</reference>
<accession>B1LL33</accession>
<proteinExistence type="inferred from homology"/>
<name>MNME_ECOSM</name>
<dbReference type="EC" id="3.6.-.-" evidence="1"/>
<dbReference type="EMBL" id="CP000970">
    <property type="protein sequence ID" value="ACB17004.1"/>
    <property type="molecule type" value="Genomic_DNA"/>
</dbReference>
<dbReference type="RefSeq" id="WP_001282361.1">
    <property type="nucleotide sequence ID" value="NC_010498.1"/>
</dbReference>
<dbReference type="BMRB" id="B1LL33"/>
<dbReference type="SMR" id="B1LL33"/>
<dbReference type="GeneID" id="86948644"/>
<dbReference type="KEGG" id="ecm:EcSMS35_4073"/>
<dbReference type="HOGENOM" id="CLU_019624_4_1_6"/>
<dbReference type="Proteomes" id="UP000007011">
    <property type="component" value="Chromosome"/>
</dbReference>
<dbReference type="GO" id="GO:0005829">
    <property type="term" value="C:cytosol"/>
    <property type="evidence" value="ECO:0007669"/>
    <property type="project" value="TreeGrafter"/>
</dbReference>
<dbReference type="GO" id="GO:0005525">
    <property type="term" value="F:GTP binding"/>
    <property type="evidence" value="ECO:0007669"/>
    <property type="project" value="UniProtKB-UniRule"/>
</dbReference>
<dbReference type="GO" id="GO:0003924">
    <property type="term" value="F:GTPase activity"/>
    <property type="evidence" value="ECO:0007669"/>
    <property type="project" value="UniProtKB-UniRule"/>
</dbReference>
<dbReference type="GO" id="GO:0046872">
    <property type="term" value="F:metal ion binding"/>
    <property type="evidence" value="ECO:0007669"/>
    <property type="project" value="UniProtKB-KW"/>
</dbReference>
<dbReference type="GO" id="GO:0030488">
    <property type="term" value="P:tRNA methylation"/>
    <property type="evidence" value="ECO:0007669"/>
    <property type="project" value="TreeGrafter"/>
</dbReference>
<dbReference type="GO" id="GO:0002098">
    <property type="term" value="P:tRNA wobble uridine modification"/>
    <property type="evidence" value="ECO:0007669"/>
    <property type="project" value="TreeGrafter"/>
</dbReference>
<dbReference type="CDD" id="cd04164">
    <property type="entry name" value="trmE"/>
    <property type="match status" value="1"/>
</dbReference>
<dbReference type="CDD" id="cd14858">
    <property type="entry name" value="TrmE_N"/>
    <property type="match status" value="1"/>
</dbReference>
<dbReference type="FunFam" id="3.30.1360.120:FF:000001">
    <property type="entry name" value="tRNA modification GTPase MnmE"/>
    <property type="match status" value="1"/>
</dbReference>
<dbReference type="FunFam" id="3.40.50.300:FF:000249">
    <property type="entry name" value="tRNA modification GTPase MnmE"/>
    <property type="match status" value="1"/>
</dbReference>
<dbReference type="Gene3D" id="3.40.50.300">
    <property type="entry name" value="P-loop containing nucleotide triphosphate hydrolases"/>
    <property type="match status" value="1"/>
</dbReference>
<dbReference type="Gene3D" id="3.30.1360.120">
    <property type="entry name" value="Probable tRNA modification gtpase trme, domain 1"/>
    <property type="match status" value="1"/>
</dbReference>
<dbReference type="Gene3D" id="1.20.120.430">
    <property type="entry name" value="tRNA modification GTPase MnmE domain 2"/>
    <property type="match status" value="1"/>
</dbReference>
<dbReference type="HAMAP" id="MF_00379">
    <property type="entry name" value="GTPase_MnmE"/>
    <property type="match status" value="1"/>
</dbReference>
<dbReference type="InterPro" id="IPR031168">
    <property type="entry name" value="G_TrmE"/>
</dbReference>
<dbReference type="InterPro" id="IPR006073">
    <property type="entry name" value="GTP-bd"/>
</dbReference>
<dbReference type="InterPro" id="IPR018948">
    <property type="entry name" value="GTP-bd_TrmE_N"/>
</dbReference>
<dbReference type="InterPro" id="IPR004520">
    <property type="entry name" value="GTPase_MnmE"/>
</dbReference>
<dbReference type="InterPro" id="IPR027368">
    <property type="entry name" value="MnmE_dom2"/>
</dbReference>
<dbReference type="InterPro" id="IPR025867">
    <property type="entry name" value="MnmE_helical"/>
</dbReference>
<dbReference type="InterPro" id="IPR027417">
    <property type="entry name" value="P-loop_NTPase"/>
</dbReference>
<dbReference type="InterPro" id="IPR005225">
    <property type="entry name" value="Small_GTP-bd"/>
</dbReference>
<dbReference type="InterPro" id="IPR027266">
    <property type="entry name" value="TrmE/GcvT_dom1"/>
</dbReference>
<dbReference type="NCBIfam" id="TIGR00450">
    <property type="entry name" value="mnmE_trmE_thdF"/>
    <property type="match status" value="1"/>
</dbReference>
<dbReference type="NCBIfam" id="NF003661">
    <property type="entry name" value="PRK05291.1-3"/>
    <property type="match status" value="1"/>
</dbReference>
<dbReference type="NCBIfam" id="TIGR00231">
    <property type="entry name" value="small_GTP"/>
    <property type="match status" value="1"/>
</dbReference>
<dbReference type="PANTHER" id="PTHR42714">
    <property type="entry name" value="TRNA MODIFICATION GTPASE GTPBP3"/>
    <property type="match status" value="1"/>
</dbReference>
<dbReference type="PANTHER" id="PTHR42714:SF2">
    <property type="entry name" value="TRNA MODIFICATION GTPASE GTPBP3, MITOCHONDRIAL"/>
    <property type="match status" value="1"/>
</dbReference>
<dbReference type="Pfam" id="PF01926">
    <property type="entry name" value="MMR_HSR1"/>
    <property type="match status" value="1"/>
</dbReference>
<dbReference type="Pfam" id="PF12631">
    <property type="entry name" value="MnmE_helical"/>
    <property type="match status" value="1"/>
</dbReference>
<dbReference type="Pfam" id="PF10396">
    <property type="entry name" value="TrmE_N"/>
    <property type="match status" value="1"/>
</dbReference>
<dbReference type="SUPFAM" id="SSF52540">
    <property type="entry name" value="P-loop containing nucleoside triphosphate hydrolases"/>
    <property type="match status" value="1"/>
</dbReference>
<dbReference type="SUPFAM" id="SSF116878">
    <property type="entry name" value="TrmE connector domain"/>
    <property type="match status" value="1"/>
</dbReference>
<dbReference type="PROSITE" id="PS51709">
    <property type="entry name" value="G_TRME"/>
    <property type="match status" value="1"/>
</dbReference>